<comment type="function">
    <text evidence="1">Carrier protein involved in the D-alanylation of lipoteichoic acid (LTA). The loading of thioester-linked D-alanine onto DltC is catalyzed by D-alanine--D-alanyl carrier protein ligase DltA. The DltC-carried D-alanyl group is further transferred to cell membrane phosphatidylglycerol (PG) by forming an ester bond, probably catalyzed by DltD. D-alanylation of LTA plays an important role in modulating the properties of the cell wall in Gram-positive bacteria, influencing the net charge of the cell wall.</text>
</comment>
<comment type="pathway">
    <text evidence="1">Cell wall biogenesis; lipoteichoic acid biosynthesis.</text>
</comment>
<comment type="subcellular location">
    <subcellularLocation>
        <location evidence="1">Cytoplasm</location>
    </subcellularLocation>
</comment>
<comment type="PTM">
    <text evidence="1">4'-phosphopantetheine is transferred from CoA to a specific serine of apo-DCP.</text>
</comment>
<comment type="similarity">
    <text evidence="1">Belongs to the DltC family.</text>
</comment>
<evidence type="ECO:0000255" key="1">
    <source>
        <dbReference type="HAMAP-Rule" id="MF_00565"/>
    </source>
</evidence>
<gene>
    <name evidence="1" type="primary">dltC</name>
    <name type="ordered locus">MGAS10270_Spy1127</name>
</gene>
<sequence length="79" mass="9010">MSIEETVIELFDRLFMEDVSEMMDEDLFDAGVLDSLGTVELIVELESTFNIKVPISEFGRDDWNTVTKIVQGVEELQHA</sequence>
<accession>Q1JGF2</accession>
<keyword id="KW-0961">Cell wall biogenesis/degradation</keyword>
<keyword id="KW-0963">Cytoplasm</keyword>
<keyword id="KW-0596">Phosphopantetheine</keyword>
<keyword id="KW-0597">Phosphoprotein</keyword>
<feature type="chain" id="PRO_1000024930" description="D-alanyl carrier protein">
    <location>
        <begin position="1"/>
        <end position="79"/>
    </location>
</feature>
<feature type="domain" description="Carrier" evidence="1">
    <location>
        <begin position="1"/>
        <end position="77"/>
    </location>
</feature>
<feature type="modified residue" description="O-(pantetheine 4'-phosphoryl)serine" evidence="1">
    <location>
        <position position="35"/>
    </location>
</feature>
<reference key="1">
    <citation type="journal article" date="2006" name="Proc. Natl. Acad. Sci. U.S.A.">
        <title>Molecular genetic anatomy of inter- and intraserotype variation in the human bacterial pathogen group A Streptococcus.</title>
        <authorList>
            <person name="Beres S.B."/>
            <person name="Richter E.W."/>
            <person name="Nagiec M.J."/>
            <person name="Sumby P."/>
            <person name="Porcella S.F."/>
            <person name="DeLeo F.R."/>
            <person name="Musser J.M."/>
        </authorList>
    </citation>
    <scope>NUCLEOTIDE SEQUENCE [LARGE SCALE GENOMIC DNA]</scope>
    <source>
        <strain>MGAS10270</strain>
    </source>
</reference>
<protein>
    <recommendedName>
        <fullName evidence="1">D-alanyl carrier protein</fullName>
        <shortName evidence="1">DCP</shortName>
    </recommendedName>
    <alternativeName>
        <fullName evidence="1">D-alanine--poly(phosphoribitol) ligase subunit 2</fullName>
    </alternativeName>
</protein>
<dbReference type="EMBL" id="CP000260">
    <property type="protein sequence ID" value="ABF34192.1"/>
    <property type="molecule type" value="Genomic_DNA"/>
</dbReference>
<dbReference type="RefSeq" id="WP_002984216.1">
    <property type="nucleotide sequence ID" value="NZ_CVUH01000006.1"/>
</dbReference>
<dbReference type="SMR" id="Q1JGF2"/>
<dbReference type="GeneID" id="83690920"/>
<dbReference type="KEGG" id="sph:MGAS10270_Spy1127"/>
<dbReference type="HOGENOM" id="CLU_108696_19_0_9"/>
<dbReference type="UniPathway" id="UPA00556"/>
<dbReference type="Proteomes" id="UP000002436">
    <property type="component" value="Chromosome"/>
</dbReference>
<dbReference type="GO" id="GO:0005737">
    <property type="term" value="C:cytoplasm"/>
    <property type="evidence" value="ECO:0007669"/>
    <property type="project" value="UniProtKB-SubCell"/>
</dbReference>
<dbReference type="GO" id="GO:0036370">
    <property type="term" value="F:D-alanyl carrier activity"/>
    <property type="evidence" value="ECO:0007669"/>
    <property type="project" value="UniProtKB-UniRule"/>
</dbReference>
<dbReference type="GO" id="GO:0071555">
    <property type="term" value="P:cell wall organization"/>
    <property type="evidence" value="ECO:0007669"/>
    <property type="project" value="UniProtKB-KW"/>
</dbReference>
<dbReference type="GO" id="GO:0070395">
    <property type="term" value="P:lipoteichoic acid biosynthetic process"/>
    <property type="evidence" value="ECO:0007669"/>
    <property type="project" value="UniProtKB-UniRule"/>
</dbReference>
<dbReference type="Gene3D" id="1.10.1200.10">
    <property type="entry name" value="ACP-like"/>
    <property type="match status" value="1"/>
</dbReference>
<dbReference type="HAMAP" id="MF_00565">
    <property type="entry name" value="DltC"/>
    <property type="match status" value="1"/>
</dbReference>
<dbReference type="InterPro" id="IPR036736">
    <property type="entry name" value="ACP-like_sf"/>
</dbReference>
<dbReference type="InterPro" id="IPR003230">
    <property type="entry name" value="DltC"/>
</dbReference>
<dbReference type="InterPro" id="IPR009081">
    <property type="entry name" value="PP-bd_ACP"/>
</dbReference>
<dbReference type="NCBIfam" id="TIGR01688">
    <property type="entry name" value="dltC"/>
    <property type="match status" value="1"/>
</dbReference>
<dbReference type="NCBIfam" id="NF003464">
    <property type="entry name" value="PRK05087.1"/>
    <property type="match status" value="1"/>
</dbReference>
<dbReference type="Pfam" id="PF00550">
    <property type="entry name" value="PP-binding"/>
    <property type="match status" value="1"/>
</dbReference>
<dbReference type="SUPFAM" id="SSF47336">
    <property type="entry name" value="ACP-like"/>
    <property type="match status" value="1"/>
</dbReference>
<dbReference type="PROSITE" id="PS50075">
    <property type="entry name" value="CARRIER"/>
    <property type="match status" value="1"/>
</dbReference>
<organism>
    <name type="scientific">Streptococcus pyogenes serotype M2 (strain MGAS10270)</name>
    <dbReference type="NCBI Taxonomy" id="370552"/>
    <lineage>
        <taxon>Bacteria</taxon>
        <taxon>Bacillati</taxon>
        <taxon>Bacillota</taxon>
        <taxon>Bacilli</taxon>
        <taxon>Lactobacillales</taxon>
        <taxon>Streptococcaceae</taxon>
        <taxon>Streptococcus</taxon>
    </lineage>
</organism>
<proteinExistence type="inferred from homology"/>
<name>DLTC_STRPD</name>